<evidence type="ECO:0000255" key="1">
    <source>
        <dbReference type="HAMAP-Rule" id="MF_00183"/>
    </source>
</evidence>
<organism>
    <name type="scientific">Ruminiclostridium cellulolyticum (strain ATCC 35319 / DSM 5812 / JCM 6584 / H10)</name>
    <name type="common">Clostridium cellulolyticum</name>
    <dbReference type="NCBI Taxonomy" id="394503"/>
    <lineage>
        <taxon>Bacteria</taxon>
        <taxon>Bacillati</taxon>
        <taxon>Bacillota</taxon>
        <taxon>Clostridia</taxon>
        <taxon>Eubacteriales</taxon>
        <taxon>Oscillospiraceae</taxon>
        <taxon>Ruminiclostridium</taxon>
    </lineage>
</organism>
<name>DXR_RUMCH</name>
<accession>B8I6D9</accession>
<gene>
    <name evidence="1" type="primary">dxr</name>
    <name type="ordered locus">Ccel_0449</name>
</gene>
<reference key="1">
    <citation type="submission" date="2009-01" db="EMBL/GenBank/DDBJ databases">
        <title>Complete sequence of Clostridium cellulolyticum H10.</title>
        <authorList>
            <consortium name="US DOE Joint Genome Institute"/>
            <person name="Lucas S."/>
            <person name="Copeland A."/>
            <person name="Lapidus A."/>
            <person name="Glavina del Rio T."/>
            <person name="Dalin E."/>
            <person name="Tice H."/>
            <person name="Bruce D."/>
            <person name="Goodwin L."/>
            <person name="Pitluck S."/>
            <person name="Chertkov O."/>
            <person name="Saunders E."/>
            <person name="Brettin T."/>
            <person name="Detter J.C."/>
            <person name="Han C."/>
            <person name="Larimer F."/>
            <person name="Land M."/>
            <person name="Hauser L."/>
            <person name="Kyrpides N."/>
            <person name="Ivanova N."/>
            <person name="Zhou J."/>
            <person name="Richardson P."/>
        </authorList>
    </citation>
    <scope>NUCLEOTIDE SEQUENCE [LARGE SCALE GENOMIC DNA]</scope>
    <source>
        <strain>ATCC 35319 / DSM 5812 / JCM 6584 / H10</strain>
    </source>
</reference>
<comment type="function">
    <text evidence="1">Catalyzes the NADPH-dependent rearrangement and reduction of 1-deoxy-D-xylulose-5-phosphate (DXP) to 2-C-methyl-D-erythritol 4-phosphate (MEP).</text>
</comment>
<comment type="catalytic activity">
    <reaction evidence="1">
        <text>2-C-methyl-D-erythritol 4-phosphate + NADP(+) = 1-deoxy-D-xylulose 5-phosphate + NADPH + H(+)</text>
        <dbReference type="Rhea" id="RHEA:13717"/>
        <dbReference type="ChEBI" id="CHEBI:15378"/>
        <dbReference type="ChEBI" id="CHEBI:57783"/>
        <dbReference type="ChEBI" id="CHEBI:57792"/>
        <dbReference type="ChEBI" id="CHEBI:58262"/>
        <dbReference type="ChEBI" id="CHEBI:58349"/>
        <dbReference type="EC" id="1.1.1.267"/>
    </reaction>
    <physiologicalReaction direction="right-to-left" evidence="1">
        <dbReference type="Rhea" id="RHEA:13719"/>
    </physiologicalReaction>
</comment>
<comment type="cofactor">
    <cofactor evidence="1">
        <name>Mg(2+)</name>
        <dbReference type="ChEBI" id="CHEBI:18420"/>
    </cofactor>
    <cofactor evidence="1">
        <name>Mn(2+)</name>
        <dbReference type="ChEBI" id="CHEBI:29035"/>
    </cofactor>
</comment>
<comment type="pathway">
    <text evidence="1">Isoprenoid biosynthesis; isopentenyl diphosphate biosynthesis via DXP pathway; isopentenyl diphosphate from 1-deoxy-D-xylulose 5-phosphate: step 1/6.</text>
</comment>
<comment type="similarity">
    <text evidence="1">Belongs to the DXR family.</text>
</comment>
<keyword id="KW-0414">Isoprene biosynthesis</keyword>
<keyword id="KW-0464">Manganese</keyword>
<keyword id="KW-0479">Metal-binding</keyword>
<keyword id="KW-0521">NADP</keyword>
<keyword id="KW-0560">Oxidoreductase</keyword>
<keyword id="KW-1185">Reference proteome</keyword>
<sequence>MAKIISIIGSTGSIGRQTLEAAKNLGIKVAALSANSNIDLLEKQVHEFKPDVVSVGNSELAKEMSNRLQGFGIEVLWGQDGMKRVVEHSEADTVVTSVVGTAGLIPTIHAIRHKKNIALANKETLVTAGQLVMEDAKKNNVKIFPVDSEHSAIYQCLLGNKDKQVEKIILTASGGPFRGKNIKELKNITPAQALKHPNWSMGNKITIDSATLMNKGLEVIEAKWLFQRDLDSIQVLVHPQSIIHSMVQYVDGSVMAQLGSPDMRIPIQLALTYPDRCQNNFNKLDFLKCPPLTFEEPDIDTFKCLRLAYKSLEIGGTMPAALNAANEIAVAAFLENHIGFTEIAETIEQVMQRHNVNICPCLEDIIEVDCWARTTARQLII</sequence>
<feature type="chain" id="PRO_1000124086" description="1-deoxy-D-xylulose 5-phosphate reductoisomerase">
    <location>
        <begin position="1"/>
        <end position="381"/>
    </location>
</feature>
<feature type="binding site" evidence="1">
    <location>
        <position position="11"/>
    </location>
    <ligand>
        <name>NADPH</name>
        <dbReference type="ChEBI" id="CHEBI:57783"/>
    </ligand>
</feature>
<feature type="binding site" evidence="1">
    <location>
        <position position="12"/>
    </location>
    <ligand>
        <name>NADPH</name>
        <dbReference type="ChEBI" id="CHEBI:57783"/>
    </ligand>
</feature>
<feature type="binding site" evidence="1">
    <location>
        <position position="13"/>
    </location>
    <ligand>
        <name>NADPH</name>
        <dbReference type="ChEBI" id="CHEBI:57783"/>
    </ligand>
</feature>
<feature type="binding site" evidence="1">
    <location>
        <position position="14"/>
    </location>
    <ligand>
        <name>NADPH</name>
        <dbReference type="ChEBI" id="CHEBI:57783"/>
    </ligand>
</feature>
<feature type="binding site" evidence="1">
    <location>
        <position position="37"/>
    </location>
    <ligand>
        <name>NADPH</name>
        <dbReference type="ChEBI" id="CHEBI:57783"/>
    </ligand>
</feature>
<feature type="binding site" evidence="1">
    <location>
        <position position="121"/>
    </location>
    <ligand>
        <name>NADPH</name>
        <dbReference type="ChEBI" id="CHEBI:57783"/>
    </ligand>
</feature>
<feature type="binding site" evidence="1">
    <location>
        <position position="122"/>
    </location>
    <ligand>
        <name>1-deoxy-D-xylulose 5-phosphate</name>
        <dbReference type="ChEBI" id="CHEBI:57792"/>
    </ligand>
</feature>
<feature type="binding site" evidence="1">
    <location>
        <position position="123"/>
    </location>
    <ligand>
        <name>NADPH</name>
        <dbReference type="ChEBI" id="CHEBI:57783"/>
    </ligand>
</feature>
<feature type="binding site" evidence="1">
    <location>
        <position position="147"/>
    </location>
    <ligand>
        <name>Mn(2+)</name>
        <dbReference type="ChEBI" id="CHEBI:29035"/>
    </ligand>
</feature>
<feature type="binding site" evidence="1">
    <location>
        <position position="148"/>
    </location>
    <ligand>
        <name>1-deoxy-D-xylulose 5-phosphate</name>
        <dbReference type="ChEBI" id="CHEBI:57792"/>
    </ligand>
</feature>
<feature type="binding site" evidence="1">
    <location>
        <position position="149"/>
    </location>
    <ligand>
        <name>1-deoxy-D-xylulose 5-phosphate</name>
        <dbReference type="ChEBI" id="CHEBI:57792"/>
    </ligand>
</feature>
<feature type="binding site" evidence="1">
    <location>
        <position position="149"/>
    </location>
    <ligand>
        <name>Mn(2+)</name>
        <dbReference type="ChEBI" id="CHEBI:29035"/>
    </ligand>
</feature>
<feature type="binding site" evidence="1">
    <location>
        <position position="173"/>
    </location>
    <ligand>
        <name>1-deoxy-D-xylulose 5-phosphate</name>
        <dbReference type="ChEBI" id="CHEBI:57792"/>
    </ligand>
</feature>
<feature type="binding site" evidence="1">
    <location>
        <position position="196"/>
    </location>
    <ligand>
        <name>1-deoxy-D-xylulose 5-phosphate</name>
        <dbReference type="ChEBI" id="CHEBI:57792"/>
    </ligand>
</feature>
<feature type="binding site" evidence="1">
    <location>
        <position position="202"/>
    </location>
    <ligand>
        <name>NADPH</name>
        <dbReference type="ChEBI" id="CHEBI:57783"/>
    </ligand>
</feature>
<feature type="binding site" evidence="1">
    <location>
        <position position="209"/>
    </location>
    <ligand>
        <name>1-deoxy-D-xylulose 5-phosphate</name>
        <dbReference type="ChEBI" id="CHEBI:57792"/>
    </ligand>
</feature>
<feature type="binding site" evidence="1">
    <location>
        <position position="214"/>
    </location>
    <ligand>
        <name>1-deoxy-D-xylulose 5-phosphate</name>
        <dbReference type="ChEBI" id="CHEBI:57792"/>
    </ligand>
</feature>
<feature type="binding site" evidence="1">
    <location>
        <position position="215"/>
    </location>
    <ligand>
        <name>1-deoxy-D-xylulose 5-phosphate</name>
        <dbReference type="ChEBI" id="CHEBI:57792"/>
    </ligand>
</feature>
<feature type="binding site" evidence="1">
    <location>
        <position position="218"/>
    </location>
    <ligand>
        <name>1-deoxy-D-xylulose 5-phosphate</name>
        <dbReference type="ChEBI" id="CHEBI:57792"/>
    </ligand>
</feature>
<feature type="binding site" evidence="1">
    <location>
        <position position="218"/>
    </location>
    <ligand>
        <name>Mn(2+)</name>
        <dbReference type="ChEBI" id="CHEBI:29035"/>
    </ligand>
</feature>
<dbReference type="EC" id="1.1.1.267" evidence="1"/>
<dbReference type="EMBL" id="CP001348">
    <property type="protein sequence ID" value="ACL74831.1"/>
    <property type="molecule type" value="Genomic_DNA"/>
</dbReference>
<dbReference type="RefSeq" id="WP_012634893.1">
    <property type="nucleotide sequence ID" value="NC_011898.1"/>
</dbReference>
<dbReference type="SMR" id="B8I6D9"/>
<dbReference type="STRING" id="394503.Ccel_0449"/>
<dbReference type="KEGG" id="cce:Ccel_0449"/>
<dbReference type="eggNOG" id="COG0743">
    <property type="taxonomic scope" value="Bacteria"/>
</dbReference>
<dbReference type="HOGENOM" id="CLU_035714_4_0_9"/>
<dbReference type="OrthoDB" id="9806546at2"/>
<dbReference type="UniPathway" id="UPA00056">
    <property type="reaction ID" value="UER00092"/>
</dbReference>
<dbReference type="Proteomes" id="UP000001349">
    <property type="component" value="Chromosome"/>
</dbReference>
<dbReference type="GO" id="GO:0030604">
    <property type="term" value="F:1-deoxy-D-xylulose-5-phosphate reductoisomerase activity"/>
    <property type="evidence" value="ECO:0007669"/>
    <property type="project" value="UniProtKB-UniRule"/>
</dbReference>
<dbReference type="GO" id="GO:0030145">
    <property type="term" value="F:manganese ion binding"/>
    <property type="evidence" value="ECO:0007669"/>
    <property type="project" value="TreeGrafter"/>
</dbReference>
<dbReference type="GO" id="GO:0070402">
    <property type="term" value="F:NADPH binding"/>
    <property type="evidence" value="ECO:0007669"/>
    <property type="project" value="InterPro"/>
</dbReference>
<dbReference type="GO" id="GO:0051484">
    <property type="term" value="P:isopentenyl diphosphate biosynthetic process, methylerythritol 4-phosphate pathway involved in terpenoid biosynthetic process"/>
    <property type="evidence" value="ECO:0007669"/>
    <property type="project" value="TreeGrafter"/>
</dbReference>
<dbReference type="FunFam" id="3.40.50.720:FF:000045">
    <property type="entry name" value="1-deoxy-D-xylulose 5-phosphate reductoisomerase"/>
    <property type="match status" value="1"/>
</dbReference>
<dbReference type="Gene3D" id="1.10.1740.10">
    <property type="match status" value="1"/>
</dbReference>
<dbReference type="Gene3D" id="3.40.50.720">
    <property type="entry name" value="NAD(P)-binding Rossmann-like Domain"/>
    <property type="match status" value="1"/>
</dbReference>
<dbReference type="HAMAP" id="MF_00183">
    <property type="entry name" value="DXP_reductoisom"/>
    <property type="match status" value="1"/>
</dbReference>
<dbReference type="InterPro" id="IPR003821">
    <property type="entry name" value="DXP_reductoisomerase"/>
</dbReference>
<dbReference type="InterPro" id="IPR013644">
    <property type="entry name" value="DXP_reductoisomerase_C"/>
</dbReference>
<dbReference type="InterPro" id="IPR013512">
    <property type="entry name" value="DXP_reductoisomerase_N"/>
</dbReference>
<dbReference type="InterPro" id="IPR026877">
    <property type="entry name" value="DXPR_C"/>
</dbReference>
<dbReference type="InterPro" id="IPR036169">
    <property type="entry name" value="DXPR_C_sf"/>
</dbReference>
<dbReference type="InterPro" id="IPR036291">
    <property type="entry name" value="NAD(P)-bd_dom_sf"/>
</dbReference>
<dbReference type="NCBIfam" id="TIGR00243">
    <property type="entry name" value="Dxr"/>
    <property type="match status" value="1"/>
</dbReference>
<dbReference type="NCBIfam" id="NF009114">
    <property type="entry name" value="PRK12464.1"/>
    <property type="match status" value="1"/>
</dbReference>
<dbReference type="PANTHER" id="PTHR30525">
    <property type="entry name" value="1-DEOXY-D-XYLULOSE 5-PHOSPHATE REDUCTOISOMERASE"/>
    <property type="match status" value="1"/>
</dbReference>
<dbReference type="PANTHER" id="PTHR30525:SF0">
    <property type="entry name" value="1-DEOXY-D-XYLULOSE 5-PHOSPHATE REDUCTOISOMERASE, CHLOROPLASTIC"/>
    <property type="match status" value="1"/>
</dbReference>
<dbReference type="Pfam" id="PF08436">
    <property type="entry name" value="DXP_redisom_C"/>
    <property type="match status" value="1"/>
</dbReference>
<dbReference type="Pfam" id="PF02670">
    <property type="entry name" value="DXP_reductoisom"/>
    <property type="match status" value="1"/>
</dbReference>
<dbReference type="Pfam" id="PF13288">
    <property type="entry name" value="DXPR_C"/>
    <property type="match status" value="1"/>
</dbReference>
<dbReference type="PIRSF" id="PIRSF006205">
    <property type="entry name" value="Dxp_reductismrs"/>
    <property type="match status" value="1"/>
</dbReference>
<dbReference type="SUPFAM" id="SSF69055">
    <property type="entry name" value="1-deoxy-D-xylulose-5-phosphate reductoisomerase, C-terminal domain"/>
    <property type="match status" value="1"/>
</dbReference>
<dbReference type="SUPFAM" id="SSF55347">
    <property type="entry name" value="Glyceraldehyde-3-phosphate dehydrogenase-like, C-terminal domain"/>
    <property type="match status" value="1"/>
</dbReference>
<dbReference type="SUPFAM" id="SSF51735">
    <property type="entry name" value="NAD(P)-binding Rossmann-fold domains"/>
    <property type="match status" value="1"/>
</dbReference>
<protein>
    <recommendedName>
        <fullName evidence="1">1-deoxy-D-xylulose 5-phosphate reductoisomerase</fullName>
        <shortName evidence="1">DXP reductoisomerase</shortName>
        <ecNumber evidence="1">1.1.1.267</ecNumber>
    </recommendedName>
    <alternativeName>
        <fullName evidence="1">1-deoxyxylulose-5-phosphate reductoisomerase</fullName>
    </alternativeName>
    <alternativeName>
        <fullName evidence="1">2-C-methyl-D-erythritol 4-phosphate synthase</fullName>
    </alternativeName>
</protein>
<proteinExistence type="inferred from homology"/>